<evidence type="ECO:0000255" key="1">
    <source>
        <dbReference type="HAMAP-Rule" id="MF_00659"/>
    </source>
</evidence>
<organism>
    <name type="scientific">Salmonella newport (strain SL254)</name>
    <dbReference type="NCBI Taxonomy" id="423368"/>
    <lineage>
        <taxon>Bacteria</taxon>
        <taxon>Pseudomonadati</taxon>
        <taxon>Pseudomonadota</taxon>
        <taxon>Gammaproteobacteria</taxon>
        <taxon>Enterobacterales</taxon>
        <taxon>Enterobacteriaceae</taxon>
        <taxon>Salmonella</taxon>
    </lineage>
</organism>
<sequence>MKTKLNELLEFPTPFTYKVMGQALPELVDQVVEVVQRHAPGDYSPTVKPSSKGNYHSVSITINATHIEQVETLYEELGNIDIVRMVL</sequence>
<name>YBED_SALNS</name>
<reference key="1">
    <citation type="journal article" date="2011" name="J. Bacteriol.">
        <title>Comparative genomics of 28 Salmonella enterica isolates: evidence for CRISPR-mediated adaptive sublineage evolution.</title>
        <authorList>
            <person name="Fricke W.F."/>
            <person name="Mammel M.K."/>
            <person name="McDermott P.F."/>
            <person name="Tartera C."/>
            <person name="White D.G."/>
            <person name="Leclerc J.E."/>
            <person name="Ravel J."/>
            <person name="Cebula T.A."/>
        </authorList>
    </citation>
    <scope>NUCLEOTIDE SEQUENCE [LARGE SCALE GENOMIC DNA]</scope>
    <source>
        <strain>SL254</strain>
    </source>
</reference>
<proteinExistence type="inferred from homology"/>
<protein>
    <recommendedName>
        <fullName evidence="1">UPF0250 protein YbeD</fullName>
    </recommendedName>
</protein>
<comment type="similarity">
    <text evidence="1">Belongs to the UPF0250 family.</text>
</comment>
<gene>
    <name evidence="1" type="primary">ybeD</name>
    <name type="ordered locus">SNSL254_A0692</name>
</gene>
<feature type="chain" id="PRO_1000131258" description="UPF0250 protein YbeD">
    <location>
        <begin position="1"/>
        <end position="87"/>
    </location>
</feature>
<accession>B4SYJ4</accession>
<dbReference type="EMBL" id="CP001113">
    <property type="protein sequence ID" value="ACF63270.1"/>
    <property type="molecule type" value="Genomic_DNA"/>
</dbReference>
<dbReference type="RefSeq" id="WP_000850547.1">
    <property type="nucleotide sequence ID" value="NZ_CCMR01000003.1"/>
</dbReference>
<dbReference type="SMR" id="B4SYJ4"/>
<dbReference type="GeneID" id="83645644"/>
<dbReference type="KEGG" id="see:SNSL254_A0692"/>
<dbReference type="HOGENOM" id="CLU_161438_2_1_6"/>
<dbReference type="Proteomes" id="UP000008824">
    <property type="component" value="Chromosome"/>
</dbReference>
<dbReference type="GO" id="GO:0005829">
    <property type="term" value="C:cytosol"/>
    <property type="evidence" value="ECO:0007669"/>
    <property type="project" value="TreeGrafter"/>
</dbReference>
<dbReference type="FunFam" id="3.30.70.260:FF:000002">
    <property type="entry name" value="UPF0250 protein YbeD"/>
    <property type="match status" value="1"/>
</dbReference>
<dbReference type="Gene3D" id="3.30.70.260">
    <property type="match status" value="1"/>
</dbReference>
<dbReference type="HAMAP" id="MF_00659">
    <property type="entry name" value="UPF0250"/>
    <property type="match status" value="1"/>
</dbReference>
<dbReference type="InterPro" id="IPR007454">
    <property type="entry name" value="UPF0250_YbeD-like"/>
</dbReference>
<dbReference type="InterPro" id="IPR027471">
    <property type="entry name" value="YbeD-like_sf"/>
</dbReference>
<dbReference type="NCBIfam" id="NF003447">
    <property type="entry name" value="PRK04998.1"/>
    <property type="match status" value="1"/>
</dbReference>
<dbReference type="PANTHER" id="PTHR38036">
    <property type="entry name" value="UPF0250 PROTEIN YBED"/>
    <property type="match status" value="1"/>
</dbReference>
<dbReference type="PANTHER" id="PTHR38036:SF1">
    <property type="entry name" value="UPF0250 PROTEIN YBED"/>
    <property type="match status" value="1"/>
</dbReference>
<dbReference type="Pfam" id="PF04359">
    <property type="entry name" value="DUF493"/>
    <property type="match status" value="1"/>
</dbReference>
<dbReference type="SUPFAM" id="SSF117991">
    <property type="entry name" value="YbeD/HP0495-like"/>
    <property type="match status" value="1"/>
</dbReference>